<keyword id="KW-0020">Allergen</keyword>
<keyword id="KW-0903">Direct protein sequencing</keyword>
<keyword id="KW-1015">Disulfide bond</keyword>
<keyword id="KW-0732">Signal</keyword>
<proteinExistence type="evidence at protein level"/>
<organism>
    <name type="scientific">Ambrosia psilostachya</name>
    <name type="common">Western ragweed</name>
    <name type="synonym">Ambrosia coronopifolia</name>
    <dbReference type="NCBI Taxonomy" id="29715"/>
    <lineage>
        <taxon>Eukaryota</taxon>
        <taxon>Viridiplantae</taxon>
        <taxon>Streptophyta</taxon>
        <taxon>Embryophyta</taxon>
        <taxon>Tracheophyta</taxon>
        <taxon>Spermatophyta</taxon>
        <taxon>Magnoliopsida</taxon>
        <taxon>eudicotyledons</taxon>
        <taxon>Gunneridae</taxon>
        <taxon>Pentapetalae</taxon>
        <taxon>asterids</taxon>
        <taxon>campanulids</taxon>
        <taxon>Asterales</taxon>
        <taxon>Asteraceae</taxon>
        <taxon>Asteroideae</taxon>
        <taxon>Heliantheae alliance</taxon>
        <taxon>Heliantheae</taxon>
        <taxon>Ambrosia</taxon>
    </lineage>
</organism>
<dbReference type="EMBL" id="L24465">
    <property type="protein sequence ID" value="AAA20065.1"/>
    <property type="molecule type" value="Unassigned_DNA"/>
</dbReference>
<dbReference type="EMBL" id="L24466">
    <property type="protein sequence ID" value="AAA20067.1"/>
    <property type="molecule type" value="Unassigned_DNA"/>
</dbReference>
<dbReference type="SMR" id="P43174"/>
<dbReference type="Allergome" id="3072">
    <property type="allergen name" value="Amb p 5.0101"/>
</dbReference>
<dbReference type="Allergome" id="31">
    <property type="allergen name" value="Amb p 5"/>
</dbReference>
<dbReference type="InterPro" id="IPR005611">
    <property type="entry name" value="Amb_V_allergen"/>
</dbReference>
<dbReference type="InterPro" id="IPR036712">
    <property type="entry name" value="Amb_V_allergen_sf"/>
</dbReference>
<dbReference type="Pfam" id="PF03913">
    <property type="entry name" value="Ragweed_pollen"/>
    <property type="match status" value="1"/>
</dbReference>
<dbReference type="PIRSF" id="PIRSF002697">
    <property type="entry name" value="Amb_V_allergen"/>
    <property type="match status" value="1"/>
</dbReference>
<dbReference type="SMART" id="SM00816">
    <property type="entry name" value="Amb_V_allergen"/>
    <property type="match status" value="1"/>
</dbReference>
<dbReference type="SUPFAM" id="SSF57296">
    <property type="entry name" value="Amb V allergen"/>
    <property type="match status" value="1"/>
</dbReference>
<protein>
    <recommendedName>
        <fullName>Pollen allergen Amb p 5a</fullName>
    </recommendedName>
    <alternativeName>
        <fullName>Allergen Amb p Va</fullName>
    </alternativeName>
    <allergenName>Amb p 5a</allergenName>
</protein>
<evidence type="ECO:0000250" key="1"/>
<evidence type="ECO:0000269" key="2">
    <source>
    </source>
</evidence>
<reference key="1">
    <citation type="journal article" date="1994" name="J. Immunol.">
        <title>Immunologic and molecular characterization of Amb p V allergens from Ambrosia psilostachya (western Ragweed) pollen.</title>
        <authorList>
            <person name="Ghosh B."/>
            <person name="Rafnar T."/>
            <person name="Perry M.P."/>
            <person name="Bassolino-Klimas D."/>
            <person name="Metzler W.J."/>
            <person name="Klapper D.G."/>
            <person name="Marsh D.G."/>
        </authorList>
    </citation>
    <scope>NUCLEOTIDE SEQUENCE</scope>
    <scope>PROTEIN SEQUENCE OF 23-63</scope>
    <source>
        <tissue>Pollen</tissue>
    </source>
</reference>
<accession>P43174</accession>
<feature type="signal peptide" evidence="2">
    <location>
        <begin position="1"/>
        <end position="22"/>
    </location>
</feature>
<feature type="chain" id="PRO_0000021742" description="Pollen allergen Amb p 5a">
    <location>
        <begin position="23"/>
        <end position="77"/>
    </location>
</feature>
<feature type="disulfide bond" evidence="1">
    <location>
        <begin position="26"/>
        <end position="61"/>
    </location>
</feature>
<feature type="disulfide bond" evidence="1">
    <location>
        <begin position="33"/>
        <end position="48"/>
    </location>
</feature>
<feature type="disulfide bond" evidence="1">
    <location>
        <begin position="40"/>
        <end position="54"/>
    </location>
</feature>
<feature type="disulfide bond" evidence="1">
    <location>
        <begin position="41"/>
        <end position="65"/>
    </location>
</feature>
<feature type="sequence variant" description="In clone A3.">
    <original>E</original>
    <variation>K</variation>
    <location>
        <position position="59"/>
    </location>
</feature>
<comment type="allergen">
    <text>Causes an allergic reaction in human.</text>
</comment>
<sequence length="77" mass="8710">MNNEKNVSFEFIGSTDEVDEIKLLPCAWAGNVCGEKRAYCCSDPGRYCPWQVVCYESSEICSQKCGKMRMNVTKNTI</sequence>
<name>MPA5A_AMBPS</name>